<reference key="1">
    <citation type="journal article" date="2004" name="J. Biol. Chem.">
        <title>Molecular cloning and functional analysis of zebrafish neutral ceramidase.</title>
        <authorList>
            <person name="Yoshimura Y."/>
            <person name="Tani M."/>
            <person name="Okino N."/>
            <person name="Iida H."/>
            <person name="Ito M."/>
        </authorList>
    </citation>
    <scope>NUCLEOTIDE SEQUENCE [MRNA]</scope>
    <scope>FUNCTION</scope>
    <scope>CATALYTIC ACTIVITY</scope>
    <scope>BIOPHYSICOCHEMICAL PROPERTIES</scope>
    <scope>PATHWAY</scope>
    <scope>SUBCELLULAR LOCATION</scope>
    <scope>GLYCOSYLATION</scope>
    <scope>TISSUE SPECIFICITY</scope>
    <scope>DISRUPTION PHENOTYPE</scope>
    <scope>DEVELOPMENTAL STAGE</scope>
</reference>
<keyword id="KW-0106">Calcium</keyword>
<keyword id="KW-1003">Cell membrane</keyword>
<keyword id="KW-0217">Developmental protein</keyword>
<keyword id="KW-1015">Disulfide bond</keyword>
<keyword id="KW-0325">Glycoprotein</keyword>
<keyword id="KW-0333">Golgi apparatus</keyword>
<keyword id="KW-0378">Hydrolase</keyword>
<keyword id="KW-0443">Lipid metabolism</keyword>
<keyword id="KW-0472">Membrane</keyword>
<keyword id="KW-0479">Metal-binding</keyword>
<keyword id="KW-0496">Mitochondrion</keyword>
<keyword id="KW-1185">Reference proteome</keyword>
<keyword id="KW-0964">Secreted</keyword>
<keyword id="KW-0735">Signal-anchor</keyword>
<keyword id="KW-0746">Sphingolipid metabolism</keyword>
<keyword id="KW-0812">Transmembrane</keyword>
<keyword id="KW-1133">Transmembrane helix</keyword>
<keyword id="KW-0862">Zinc</keyword>
<evidence type="ECO:0000250" key="1"/>
<evidence type="ECO:0000250" key="2">
    <source>
        <dbReference type="UniProtKB" id="Q91XT9"/>
    </source>
</evidence>
<evidence type="ECO:0000250" key="3">
    <source>
        <dbReference type="UniProtKB" id="Q9JHE3"/>
    </source>
</evidence>
<evidence type="ECO:0000250" key="4">
    <source>
        <dbReference type="UniProtKB" id="Q9NR71"/>
    </source>
</evidence>
<evidence type="ECO:0000255" key="5"/>
<evidence type="ECO:0000256" key="6">
    <source>
        <dbReference type="SAM" id="MobiDB-lite"/>
    </source>
</evidence>
<evidence type="ECO:0000269" key="7">
    <source>
    </source>
</evidence>
<evidence type="ECO:0000305" key="8"/>
<feature type="chain" id="PRO_0000247105" description="Neutral ceramidase">
    <location>
        <begin position="1"/>
        <end position="743"/>
    </location>
</feature>
<feature type="topological domain" description="Cytoplasmic" evidence="5">
    <location>
        <begin position="1"/>
        <end position="14"/>
    </location>
</feature>
<feature type="transmembrane region" description="Helical; Signal-anchor for type II membrane protein" evidence="5">
    <location>
        <begin position="15"/>
        <end position="35"/>
    </location>
</feature>
<feature type="topological domain" description="Lumenal" evidence="5">
    <location>
        <begin position="36"/>
        <end position="743"/>
    </location>
</feature>
<feature type="region of interest" description="Disordered" evidence="6">
    <location>
        <begin position="40"/>
        <end position="60"/>
    </location>
</feature>
<feature type="compositionally biased region" description="Pro residues" evidence="6">
    <location>
        <begin position="49"/>
        <end position="59"/>
    </location>
</feature>
<feature type="active site" description="Nucleophile" evidence="1">
    <location>
        <position position="312"/>
    </location>
</feature>
<feature type="binding site" evidence="4">
    <location>
        <position position="151"/>
    </location>
    <ligand>
        <name>Zn(2+)</name>
        <dbReference type="ChEBI" id="CHEBI:29105"/>
    </ligand>
</feature>
<feature type="binding site" evidence="4">
    <location>
        <position position="260"/>
    </location>
    <ligand>
        <name>Zn(2+)</name>
        <dbReference type="ChEBI" id="CHEBI:29105"/>
    </ligand>
</feature>
<feature type="binding site" evidence="4">
    <location>
        <position position="498"/>
    </location>
    <ligand>
        <name>Zn(2+)</name>
        <dbReference type="ChEBI" id="CHEBI:29105"/>
    </ligand>
</feature>
<feature type="binding site" evidence="4">
    <location>
        <position position="538"/>
    </location>
    <ligand>
        <name>Zn(2+)</name>
        <dbReference type="ChEBI" id="CHEBI:29105"/>
    </ligand>
</feature>
<feature type="binding site" evidence="4">
    <location>
        <position position="672"/>
    </location>
    <ligand>
        <name>Ca(2+)</name>
        <dbReference type="ChEBI" id="CHEBI:29108"/>
    </ligand>
</feature>
<feature type="binding site" evidence="4">
    <location>
        <position position="674"/>
    </location>
    <ligand>
        <name>Ca(2+)</name>
        <dbReference type="ChEBI" id="CHEBI:29108"/>
    </ligand>
</feature>
<feature type="binding site" evidence="4">
    <location>
        <position position="677"/>
    </location>
    <ligand>
        <name>Ca(2+)</name>
        <dbReference type="ChEBI" id="CHEBI:29108"/>
    </ligand>
</feature>
<feature type="glycosylation site" description="N-linked (GlcNAc...) asparagine" evidence="5">
    <location>
        <position position="265"/>
    </location>
</feature>
<feature type="glycosylation site" description="N-linked (GlcNAc...) asparagine" evidence="5">
    <location>
        <position position="331"/>
    </location>
</feature>
<feature type="glycosylation site" description="N-linked (GlcNAc...) asparagine" evidence="5">
    <location>
        <position position="389"/>
    </location>
</feature>
<feature type="glycosylation site" description="N-linked (GlcNAc...) asparagine" evidence="5">
    <location>
        <position position="398"/>
    </location>
</feature>
<feature type="glycosylation site" description="N-linked (GlcNAc...) asparagine" evidence="5">
    <location>
        <position position="451"/>
    </location>
</feature>
<feature type="glycosylation site" description="N-linked (GlcNAc...) asparagine" evidence="5">
    <location>
        <position position="661"/>
    </location>
</feature>
<feature type="glycosylation site" description="N-linked (GlcNAc...) asparagine" evidence="5">
    <location>
        <position position="720"/>
    </location>
</feature>
<feature type="disulfide bond" evidence="4">
    <location>
        <begin position="320"/>
        <end position="334"/>
    </location>
</feature>
<feature type="disulfide bond" evidence="4">
    <location>
        <begin position="327"/>
        <end position="342"/>
    </location>
</feature>
<feature type="disulfide bond" evidence="4">
    <location>
        <begin position="406"/>
        <end position="456"/>
    </location>
</feature>
<protein>
    <recommendedName>
        <fullName evidence="8">Neutral ceramidase</fullName>
        <shortName>N-CDase</shortName>
        <shortName>NCDase</shortName>
        <ecNumber evidence="7">3.5.1.23</ecNumber>
    </recommendedName>
    <alternativeName>
        <fullName>Acylsphingosine deacylase 2</fullName>
    </alternativeName>
    <alternativeName>
        <fullName>N-acylsphingosine amidohydrolase 2</fullName>
        <shortName>znCD</shortName>
    </alternativeName>
</protein>
<accession>Q5W7F1</accession>
<proteinExistence type="evidence at protein level"/>
<dbReference type="EC" id="3.5.1.23" evidence="7"/>
<dbReference type="EMBL" id="AB194413">
    <property type="protein sequence ID" value="BAD69590.1"/>
    <property type="molecule type" value="mRNA"/>
</dbReference>
<dbReference type="RefSeq" id="NP_001007764.1">
    <property type="nucleotide sequence ID" value="NM_001007763.1"/>
</dbReference>
<dbReference type="SMR" id="Q5W7F1"/>
<dbReference type="FunCoup" id="Q5W7F1">
    <property type="interactions" value="1045"/>
</dbReference>
<dbReference type="STRING" id="7955.ENSDARP00000119244"/>
<dbReference type="GlyCosmos" id="Q5W7F1">
    <property type="glycosylation" value="7 sites, No reported glycans"/>
</dbReference>
<dbReference type="PaxDb" id="7955-ENSDARP00000024847"/>
<dbReference type="Ensembl" id="ENSDART00000146650">
    <property type="protein sequence ID" value="ENSDARP00000119244"/>
    <property type="gene ID" value="ENSDARG00000012829"/>
</dbReference>
<dbReference type="GeneID" id="493602"/>
<dbReference type="KEGG" id="dre:493602"/>
<dbReference type="AGR" id="ZFIN:ZDB-GENE-041112-1"/>
<dbReference type="CTD" id="56624"/>
<dbReference type="ZFIN" id="ZDB-GENE-041112-1">
    <property type="gene designation" value="asah2"/>
</dbReference>
<dbReference type="eggNOG" id="KOG2232">
    <property type="taxonomic scope" value="Eukaryota"/>
</dbReference>
<dbReference type="HOGENOM" id="CLU_011300_2_0_1"/>
<dbReference type="InParanoid" id="Q5W7F1"/>
<dbReference type="OMA" id="GTTVQTC"/>
<dbReference type="OrthoDB" id="191371at2759"/>
<dbReference type="PhylomeDB" id="Q5W7F1"/>
<dbReference type="TreeFam" id="TF300786"/>
<dbReference type="BRENDA" id="3.5.1.23">
    <property type="organism ID" value="928"/>
</dbReference>
<dbReference type="Reactome" id="R-DRE-9840310">
    <property type="pathway name" value="Glycosphingolipid catabolism"/>
</dbReference>
<dbReference type="UniPathway" id="UPA00222"/>
<dbReference type="PRO" id="PR:Q5W7F1"/>
<dbReference type="Proteomes" id="UP000000437">
    <property type="component" value="Chromosome 12"/>
</dbReference>
<dbReference type="Bgee" id="ENSDARG00000012829">
    <property type="expression patterns" value="Expressed in intestine and 7 other cell types or tissues"/>
</dbReference>
<dbReference type="GO" id="GO:0016324">
    <property type="term" value="C:apical plasma membrane"/>
    <property type="evidence" value="ECO:0000314"/>
    <property type="project" value="ZFIN"/>
</dbReference>
<dbReference type="GO" id="GO:0005901">
    <property type="term" value="C:caveola"/>
    <property type="evidence" value="ECO:0007669"/>
    <property type="project" value="UniProtKB-SubCell"/>
</dbReference>
<dbReference type="GO" id="GO:0005789">
    <property type="term" value="C:endoplasmic reticulum membrane"/>
    <property type="evidence" value="ECO:0000314"/>
    <property type="project" value="ZFIN"/>
</dbReference>
<dbReference type="GO" id="GO:0005576">
    <property type="term" value="C:extracellular region"/>
    <property type="evidence" value="ECO:0000318"/>
    <property type="project" value="GO_Central"/>
</dbReference>
<dbReference type="GO" id="GO:0000139">
    <property type="term" value="C:Golgi membrane"/>
    <property type="evidence" value="ECO:0000314"/>
    <property type="project" value="ZFIN"/>
</dbReference>
<dbReference type="GO" id="GO:0005739">
    <property type="term" value="C:mitochondrion"/>
    <property type="evidence" value="ECO:0000250"/>
    <property type="project" value="UniProtKB"/>
</dbReference>
<dbReference type="GO" id="GO:0005886">
    <property type="term" value="C:plasma membrane"/>
    <property type="evidence" value="ECO:0000314"/>
    <property type="project" value="ZFIN"/>
</dbReference>
<dbReference type="GO" id="GO:0005509">
    <property type="term" value="F:calcium ion binding"/>
    <property type="evidence" value="ECO:0000250"/>
    <property type="project" value="UniProtKB"/>
</dbReference>
<dbReference type="GO" id="GO:0017040">
    <property type="term" value="F:N-acylsphingosine amidohydrolase activity"/>
    <property type="evidence" value="ECO:0000314"/>
    <property type="project" value="ZFIN"/>
</dbReference>
<dbReference type="GO" id="GO:0008270">
    <property type="term" value="F:zinc ion binding"/>
    <property type="evidence" value="ECO:0000250"/>
    <property type="project" value="UniProtKB"/>
</dbReference>
<dbReference type="GO" id="GO:0046513">
    <property type="term" value="P:ceramide biosynthetic process"/>
    <property type="evidence" value="ECO:0000250"/>
    <property type="project" value="UniProtKB"/>
</dbReference>
<dbReference type="GO" id="GO:0046514">
    <property type="term" value="P:ceramide catabolic process"/>
    <property type="evidence" value="ECO:0000250"/>
    <property type="project" value="UniProtKB"/>
</dbReference>
<dbReference type="GO" id="GO:0006672">
    <property type="term" value="P:ceramide metabolic process"/>
    <property type="evidence" value="ECO:0000314"/>
    <property type="project" value="ZFIN"/>
</dbReference>
<dbReference type="GO" id="GO:0042759">
    <property type="term" value="P:long-chain fatty acid biosynthetic process"/>
    <property type="evidence" value="ECO:0000318"/>
    <property type="project" value="GO_Central"/>
</dbReference>
<dbReference type="GO" id="GO:0007346">
    <property type="term" value="P:regulation of mitotic cell cycle"/>
    <property type="evidence" value="ECO:0000250"/>
    <property type="project" value="UniProtKB"/>
</dbReference>
<dbReference type="GO" id="GO:0046512">
    <property type="term" value="P:sphingosine biosynthetic process"/>
    <property type="evidence" value="ECO:0000250"/>
    <property type="project" value="UniProtKB"/>
</dbReference>
<dbReference type="GO" id="GO:0006670">
    <property type="term" value="P:sphingosine metabolic process"/>
    <property type="evidence" value="ECO:0000250"/>
    <property type="project" value="UniProtKB"/>
</dbReference>
<dbReference type="FunFam" id="2.60.40.2300:FF:000001">
    <property type="entry name" value="N-acylsphingosine amidohydrolase 2"/>
    <property type="match status" value="1"/>
</dbReference>
<dbReference type="Gene3D" id="2.60.40.2300">
    <property type="entry name" value="Neutral/alkaline non-lysosomal ceramidase, C-terminal domain"/>
    <property type="match status" value="1"/>
</dbReference>
<dbReference type="InterPro" id="IPR006823">
    <property type="entry name" value="Ceramidase_alk"/>
</dbReference>
<dbReference type="InterPro" id="IPR038445">
    <property type="entry name" value="NCDase_C_sf"/>
</dbReference>
<dbReference type="InterPro" id="IPR031331">
    <property type="entry name" value="NEUT/ALK_ceramidase_C"/>
</dbReference>
<dbReference type="InterPro" id="IPR031329">
    <property type="entry name" value="NEUT/ALK_ceramidase_N"/>
</dbReference>
<dbReference type="PANTHER" id="PTHR12670">
    <property type="entry name" value="CERAMIDASE"/>
    <property type="match status" value="1"/>
</dbReference>
<dbReference type="PANTHER" id="PTHR12670:SF1">
    <property type="entry name" value="NEUTRAL CERAMIDASE"/>
    <property type="match status" value="1"/>
</dbReference>
<dbReference type="Pfam" id="PF04734">
    <property type="entry name" value="Ceramidase_alk"/>
    <property type="match status" value="1"/>
</dbReference>
<dbReference type="Pfam" id="PF17048">
    <property type="entry name" value="Ceramidse_alk_C"/>
    <property type="match status" value="1"/>
</dbReference>
<comment type="function">
    <text evidence="3 4 7">Plasma membrane ceramidase that hydrolyzes sphingolipid ceramides into sphingosine and free fatty acids at neutral pH (PubMed:15271994). Ceramides, sphingosine, and its phosphorylated form sphingosine-1-phosphate are bioactive lipids that mediate cellular signaling pathways regulating several biological processes including cell proliferation, apoptosis and differentiation. Also catalyzes the reverse reaction allowing the synthesis of ceramides from fatty acids and sphingosine. Together with sphingomyelinase, participates in the production of sphingosine and sphingosine-1-phosphate from the degradation of sphingomyelin, a sphingolipid enriched in the plasma membrane of cells (By similarity). Also participates in the hydrolysis of ceramides from the extracellular milieu allowing the production of sphingosine-1-phosphate inside and outside cells (By similarity).</text>
</comment>
<comment type="catalytic activity">
    <reaction evidence="7">
        <text>an N-acylsphing-4-enine + H2O = sphing-4-enine + a fatty acid</text>
        <dbReference type="Rhea" id="RHEA:20856"/>
        <dbReference type="ChEBI" id="CHEBI:15377"/>
        <dbReference type="ChEBI" id="CHEBI:28868"/>
        <dbReference type="ChEBI" id="CHEBI:52639"/>
        <dbReference type="ChEBI" id="CHEBI:57756"/>
        <dbReference type="EC" id="3.5.1.23"/>
    </reaction>
    <physiologicalReaction direction="left-to-right" evidence="3">
        <dbReference type="Rhea" id="RHEA:20857"/>
    </physiologicalReaction>
</comment>
<comment type="catalytic activity">
    <reaction evidence="7">
        <text>N-dodecanoylsphing-4-enine + H2O = dodecanoate + sphing-4-enine</text>
        <dbReference type="Rhea" id="RHEA:41291"/>
        <dbReference type="ChEBI" id="CHEBI:15377"/>
        <dbReference type="ChEBI" id="CHEBI:18262"/>
        <dbReference type="ChEBI" id="CHEBI:57756"/>
        <dbReference type="ChEBI" id="CHEBI:72956"/>
    </reaction>
    <physiologicalReaction direction="left-to-right" evidence="4">
        <dbReference type="Rhea" id="RHEA:41292"/>
    </physiologicalReaction>
    <physiologicalReaction direction="right-to-left" evidence="3">
        <dbReference type="Rhea" id="RHEA:41293"/>
    </physiologicalReaction>
</comment>
<comment type="cofactor">
    <cofactor evidence="4">
        <name>Zn(2+)</name>
        <dbReference type="ChEBI" id="CHEBI:29105"/>
    </cofactor>
    <text evidence="4">Binds 1 zinc ion per subunit.</text>
</comment>
<comment type="biophysicochemical properties">
    <phDependence>
        <text evidence="7">Optimum pH is 7.5 for N-dodecanoylsphing-4-enine hydrolysis.</text>
    </phDependence>
</comment>
<comment type="pathway">
    <text evidence="7">Lipid metabolism; sphingolipid metabolism.</text>
</comment>
<comment type="subcellular location">
    <molecule>Neutral ceramidase</molecule>
    <subcellularLocation>
        <location evidence="7">Cell membrane</location>
        <topology evidence="2">Single-pass type II membrane protein</topology>
    </subcellularLocation>
    <subcellularLocation>
        <location evidence="3">Membrane raft</location>
        <topology evidence="2">Single-pass type II membrane protein</topology>
    </subcellularLocation>
    <subcellularLocation>
        <location evidence="3">Membrane</location>
        <location evidence="3">Caveola</location>
        <topology evidence="2">Single-pass type II membrane protein</topology>
    </subcellularLocation>
    <subcellularLocation>
        <location evidence="4">Golgi apparatus membrane</location>
        <topology evidence="2">Single-pass type II membrane protein</topology>
    </subcellularLocation>
    <subcellularLocation>
        <location evidence="4">Mitochondrion</location>
    </subcellularLocation>
    <subcellularLocation>
        <location evidence="4">Secreted</location>
        <location evidence="4">Extracellular exosome</location>
    </subcellularLocation>
</comment>
<comment type="tissue specificity">
    <text evidence="7">Detected in intestine (at protein level).</text>
</comment>
<comment type="developmental stage">
    <text evidence="7">Expressed and active during embryonic development.</text>
</comment>
<comment type="PTM">
    <text evidence="7">N-glycosylated.</text>
</comment>
<comment type="PTM">
    <text evidence="7">O-glycosylated.</text>
</comment>
<comment type="disruption phenotype">
    <text evidence="7">Fishes display severe embryonic morphological and cellular abnormalities such as abnormal morphogenesis in the head and tail, pericardial edema, defect of blood cell circulation, and an increase of apoptotic cells, especially in the head and neural tube regions, at 36 hours post-fertilization.</text>
</comment>
<comment type="similarity">
    <text evidence="8">Belongs to the neutral ceramidase family.</text>
</comment>
<sequence length="743" mass="82069">MASKSRRLSGLEISLIVLFLLMTAVSVALITVLALKQESDKKEEVTPEEPSPSVTPPEKPYLIGVGRADCTGPVADLPMMGYANTDQTARGLHTRLFSRAFIVDDGNKRVVFVTSDIGMVSQRLRLEVFQALKEKYGDLYRQDNVVLSGTHTHSGVGGYFQYTLFMITSKGYIKPSIQAIVSGIVKSIDIAHRNLRPGRIFINKGQVADSNFNRSPHSYMNNPEEERNRYEFNTDKQIVVLKFTDLDGDGIGLLSWFAVHPVSMNYTNRMVSSDNLGYASYIFEQEKNIGFLPGEKGPFVAGFSSSNLGDSSPNIRGPVCVNTGLKCDYINSSCPVGGKKACIAFGPGEDMFESTRIIGENMFKIAKELYGSAKQELHGPVYGAHQWVNMTDETVQFNSTHTGRTCKPALGHSFAAGTTDGGGEFNFLQGDTEGDPFWDGIRDAVLGPPSNETKACHQPKPILFSTGEMDSPLPWHPAIVDVQIITIGSLAVVAVPGEFTTMSGRRIREAVKRELEVKEPFTNAEVVVAGLCNIYTHYITTYEEYQIQRYEGASTIFGPHTLSAYIQRYRGLAKAIAHGTIGELPKGPEPPFFDEDKLFNQVRDPVADVAPVGTTFGDVLQEVNPVYKVGEIASVTFVSGNPRHSGDIRDTTLVTVERFHNDTGSWEIIHNDASWETRFHWIKGLAGRSQAKVEWHIPQTAQAGTYQIQYFGHYKQTTENTTVITPYVGTSAAFKVARSFYYF</sequence>
<name>ASAH2_DANRE</name>
<organism>
    <name type="scientific">Danio rerio</name>
    <name type="common">Zebrafish</name>
    <name type="synonym">Brachydanio rerio</name>
    <dbReference type="NCBI Taxonomy" id="7955"/>
    <lineage>
        <taxon>Eukaryota</taxon>
        <taxon>Metazoa</taxon>
        <taxon>Chordata</taxon>
        <taxon>Craniata</taxon>
        <taxon>Vertebrata</taxon>
        <taxon>Euteleostomi</taxon>
        <taxon>Actinopterygii</taxon>
        <taxon>Neopterygii</taxon>
        <taxon>Teleostei</taxon>
        <taxon>Ostariophysi</taxon>
        <taxon>Cypriniformes</taxon>
        <taxon>Danionidae</taxon>
        <taxon>Danioninae</taxon>
        <taxon>Danio</taxon>
    </lineage>
</organism>
<gene>
    <name type="primary">asah2</name>
</gene>